<feature type="chain" id="PRO_0000076538" description="Fluconazole resistance protein 3">
    <location>
        <begin position="1"/>
        <end position="399"/>
    </location>
</feature>
<feature type="domain" description="bZIP" evidence="1">
    <location>
        <begin position="210"/>
        <end position="273"/>
    </location>
</feature>
<feature type="region of interest" description="Disordered" evidence="3">
    <location>
        <begin position="1"/>
        <end position="21"/>
    </location>
</feature>
<feature type="region of interest" description="Disordered" evidence="3">
    <location>
        <begin position="103"/>
        <end position="197"/>
    </location>
</feature>
<feature type="region of interest" description="Basic motif" evidence="1">
    <location>
        <begin position="215"/>
        <end position="234"/>
    </location>
</feature>
<feature type="region of interest" description="Leucine-zipper" evidence="1">
    <location>
        <begin position="235"/>
        <end position="242"/>
    </location>
</feature>
<feature type="compositionally biased region" description="Polar residues" evidence="3">
    <location>
        <begin position="103"/>
        <end position="145"/>
    </location>
</feature>
<feature type="compositionally biased region" description="Low complexity" evidence="3">
    <location>
        <begin position="167"/>
        <end position="184"/>
    </location>
</feature>
<protein>
    <recommendedName>
        <fullName>Fluconazole resistance protein 3</fullName>
    </recommendedName>
</protein>
<keyword id="KW-0010">Activator</keyword>
<keyword id="KW-0238">DNA-binding</keyword>
<keyword id="KW-0539">Nucleus</keyword>
<keyword id="KW-0804">Transcription</keyword>
<keyword id="KW-0805">Transcription regulation</keyword>
<evidence type="ECO:0000255" key="1">
    <source>
        <dbReference type="PROSITE-ProRule" id="PRU00978"/>
    </source>
</evidence>
<evidence type="ECO:0000255" key="2">
    <source>
        <dbReference type="RuleBase" id="RU000470"/>
    </source>
</evidence>
<evidence type="ECO:0000256" key="3">
    <source>
        <dbReference type="SAM" id="MobiDB-lite"/>
    </source>
</evidence>
<evidence type="ECO:0000269" key="4">
    <source>
    </source>
</evidence>
<evidence type="ECO:0000269" key="5">
    <source>
    </source>
</evidence>
<evidence type="ECO:0000305" key="6"/>
<evidence type="ECO:0000312" key="7">
    <source>
        <dbReference type="EMBL" id="AAL35299.1"/>
    </source>
</evidence>
<comment type="function">
    <text evidence="4 5">Transcription factor that confers fluconazole resistance in S.cerevisiae by activation of the PDR5 gene. Can also activate the transcription of S.cerevisiae genes involved in 4-nitroquinoline-N-oxide resistance.</text>
</comment>
<comment type="subcellular location">
    <subcellularLocation>
        <location evidence="6">Nucleus</location>
    </subcellularLocation>
</comment>
<comment type="similarity">
    <text evidence="2 6">Belongs to the bZIP family.</text>
</comment>
<proteinExistence type="inferred from homology"/>
<accession>Q8X229</accession>
<reference evidence="6" key="1">
    <citation type="journal article" date="2001" name="Yeast">
        <title>Functional isolation of the Candida albicans FCR3 gene encoding a bZip transcription factor homologous to Saccharomyces cerevisiae Yap3p.</title>
        <authorList>
            <person name="Yang X."/>
            <person name="Talibi D."/>
            <person name="Weber S."/>
            <person name="Poisson G."/>
            <person name="Raymond M."/>
        </authorList>
    </citation>
    <scope>NUCLEOTIDE SEQUENCE [GENOMIC DNA]</scope>
    <scope>FUNCTION</scope>
    <source>
        <strain>ATCC 11651 / B792 / 171D</strain>
    </source>
</reference>
<reference evidence="6" key="2">
    <citation type="journal article" date="1999" name="J. Bacteriol.">
        <title>Isolation of a putative Candida albicans transcriptional regulator involved in pleiotropic drug resistance by functional complementation of a pdr1 pdr3 mutation in Saccharomyces cerevisiae.</title>
        <authorList>
            <person name="Talibi D."/>
            <person name="Raymond M."/>
        </authorList>
    </citation>
    <scope>FUNCTION</scope>
    <source>
        <strain>ATCC 11651 / B792 / 171D</strain>
    </source>
</reference>
<sequence length="399" mass="44483">MNFKTENSTTPNGDWSQSKAFTNSGSSFPVLNGTCELDQENLALSNSGQPESIFTQDSGLHGIDVAAPSDITDLNNQSGYQYNNNLAHDLYFTGSMEMPTTQHPYITNTNNHLSYSNSSEEFSPIGNNMSPDSTGGANSNNFTSGNKRKASNESFSPLSGHHYGTESGNNNNNNGTSRSSQSSSHKSRKKLLDEKDAALIARDDSELTEEELQMKRKAQNRAAQRAFRERKESKLKELEAKLLASEEERQKLLDELEQIKKQNISIATENEILKHNGMGNINNDVQIGNLSSYGRLQVDKFNFPKTQKDFIEHVLQGTNHQLKDENKDKVYNDNQGHKLLALGAVWDYLQIKAEEADLDFNSIDFNDVMEKLKGNEKCHGYGPAYPLELVNEAIESSLN</sequence>
<organism evidence="7">
    <name type="scientific">Candida albicans</name>
    <name type="common">Yeast</name>
    <dbReference type="NCBI Taxonomy" id="5476"/>
    <lineage>
        <taxon>Eukaryota</taxon>
        <taxon>Fungi</taxon>
        <taxon>Dikarya</taxon>
        <taxon>Ascomycota</taxon>
        <taxon>Saccharomycotina</taxon>
        <taxon>Pichiomycetes</taxon>
        <taxon>Debaryomycetaceae</taxon>
        <taxon>Candida/Lodderomyces clade</taxon>
        <taxon>Candida</taxon>
    </lineage>
</organism>
<name>FCR3_CANAX</name>
<gene>
    <name type="primary">FCR3</name>
</gene>
<dbReference type="EMBL" id="AF342983">
    <property type="protein sequence ID" value="AAL35299.1"/>
    <property type="molecule type" value="Genomic_DNA"/>
</dbReference>
<dbReference type="SMR" id="Q8X229"/>
<dbReference type="VEuPathDB" id="FungiDB:C5_01810W_A"/>
<dbReference type="VEuPathDB" id="FungiDB:CAWG_04566"/>
<dbReference type="GO" id="GO:0005634">
    <property type="term" value="C:nucleus"/>
    <property type="evidence" value="ECO:0000305"/>
    <property type="project" value="UniProtKB"/>
</dbReference>
<dbReference type="GO" id="GO:0090575">
    <property type="term" value="C:RNA polymerase II transcription regulator complex"/>
    <property type="evidence" value="ECO:0007669"/>
    <property type="project" value="TreeGrafter"/>
</dbReference>
<dbReference type="GO" id="GO:0001228">
    <property type="term" value="F:DNA-binding transcription activator activity, RNA polymerase II-specific"/>
    <property type="evidence" value="ECO:0007669"/>
    <property type="project" value="TreeGrafter"/>
</dbReference>
<dbReference type="GO" id="GO:0003700">
    <property type="term" value="F:DNA-binding transcription factor activity"/>
    <property type="evidence" value="ECO:0000314"/>
    <property type="project" value="UniProtKB"/>
</dbReference>
<dbReference type="GO" id="GO:0000976">
    <property type="term" value="F:transcription cis-regulatory region binding"/>
    <property type="evidence" value="ECO:0007669"/>
    <property type="project" value="InterPro"/>
</dbReference>
<dbReference type="GO" id="GO:0045893">
    <property type="term" value="P:positive regulation of DNA-templated transcription"/>
    <property type="evidence" value="ECO:0000314"/>
    <property type="project" value="UniProtKB"/>
</dbReference>
<dbReference type="CDD" id="cd14688">
    <property type="entry name" value="bZIP_YAP"/>
    <property type="match status" value="1"/>
</dbReference>
<dbReference type="Gene3D" id="1.20.5.170">
    <property type="match status" value="1"/>
</dbReference>
<dbReference type="Gene3D" id="1.10.238.100">
    <property type="entry name" value="YAP1 redox domain. Chain B"/>
    <property type="match status" value="1"/>
</dbReference>
<dbReference type="InterPro" id="IPR050936">
    <property type="entry name" value="AP-1-like"/>
</dbReference>
<dbReference type="InterPro" id="IPR004827">
    <property type="entry name" value="bZIP"/>
</dbReference>
<dbReference type="InterPro" id="IPR046347">
    <property type="entry name" value="bZIP_sf"/>
</dbReference>
<dbReference type="PANTHER" id="PTHR40621:SF8">
    <property type="entry name" value="AP-1-LIKE TRANSCRIPTION FACTOR YAP3"/>
    <property type="match status" value="1"/>
</dbReference>
<dbReference type="PANTHER" id="PTHR40621">
    <property type="entry name" value="TRANSCRIPTION FACTOR KAPC-RELATED"/>
    <property type="match status" value="1"/>
</dbReference>
<dbReference type="SMART" id="SM00338">
    <property type="entry name" value="BRLZ"/>
    <property type="match status" value="1"/>
</dbReference>
<dbReference type="SUPFAM" id="SSF57959">
    <property type="entry name" value="Leucine zipper domain"/>
    <property type="match status" value="1"/>
</dbReference>
<dbReference type="PROSITE" id="PS50217">
    <property type="entry name" value="BZIP"/>
    <property type="match status" value="1"/>
</dbReference>
<dbReference type="PROSITE" id="PS00036">
    <property type="entry name" value="BZIP_BASIC"/>
    <property type="match status" value="1"/>
</dbReference>